<name>LGT_FRAT1</name>
<sequence length="268" mass="30574">MLQYPHINPVALQLGPIKIHWYGLMYLLGIFAGWYLTRYRAKVKPWAPIKPEQVGDLTFYVALGVILGGRIGYIIFYNLPYYFHNPSQMFFLWDGGMSFHGGFIGVLIAFALFARKIGANFFDLGEFVAPVIPIGLGAGRIGNFINGELWGKVTDSPLGMVFPTGGPLPRYPSQLFEFFFEGVVLFSVLWLVTIKKRPRYLVLGLFMFLYGCARFICEFFRQPDPQYGYIFFNWMTMGQILSIPMILLGAVILIAVFIKIRKNKCKNI</sequence>
<accession>Q14H08</accession>
<organism>
    <name type="scientific">Francisella tularensis subsp. tularensis (strain FSC 198)</name>
    <dbReference type="NCBI Taxonomy" id="393115"/>
    <lineage>
        <taxon>Bacteria</taxon>
        <taxon>Pseudomonadati</taxon>
        <taxon>Pseudomonadota</taxon>
        <taxon>Gammaproteobacteria</taxon>
        <taxon>Thiotrichales</taxon>
        <taxon>Francisellaceae</taxon>
        <taxon>Francisella</taxon>
    </lineage>
</organism>
<gene>
    <name evidence="1" type="primary">lgt</name>
    <name type="ordered locus">FTF1228</name>
</gene>
<dbReference type="EC" id="2.5.1.145" evidence="1"/>
<dbReference type="EMBL" id="AM286280">
    <property type="protein sequence ID" value="CAL09244.1"/>
    <property type="molecule type" value="Genomic_DNA"/>
</dbReference>
<dbReference type="RefSeq" id="WP_003021517.1">
    <property type="nucleotide sequence ID" value="NC_008245.1"/>
</dbReference>
<dbReference type="SMR" id="Q14H08"/>
<dbReference type="KEGG" id="ftf:FTF1228"/>
<dbReference type="HOGENOM" id="CLU_013386_1_0_6"/>
<dbReference type="UniPathway" id="UPA00664"/>
<dbReference type="GO" id="GO:0005886">
    <property type="term" value="C:plasma membrane"/>
    <property type="evidence" value="ECO:0007669"/>
    <property type="project" value="UniProtKB-SubCell"/>
</dbReference>
<dbReference type="GO" id="GO:0008961">
    <property type="term" value="F:phosphatidylglycerol-prolipoprotein diacylglyceryl transferase activity"/>
    <property type="evidence" value="ECO:0007669"/>
    <property type="project" value="UniProtKB-UniRule"/>
</dbReference>
<dbReference type="GO" id="GO:0042158">
    <property type="term" value="P:lipoprotein biosynthetic process"/>
    <property type="evidence" value="ECO:0007669"/>
    <property type="project" value="UniProtKB-UniRule"/>
</dbReference>
<dbReference type="HAMAP" id="MF_01147">
    <property type="entry name" value="Lgt"/>
    <property type="match status" value="1"/>
</dbReference>
<dbReference type="InterPro" id="IPR001640">
    <property type="entry name" value="Lgt"/>
</dbReference>
<dbReference type="NCBIfam" id="TIGR00544">
    <property type="entry name" value="lgt"/>
    <property type="match status" value="1"/>
</dbReference>
<dbReference type="PANTHER" id="PTHR30589:SF0">
    <property type="entry name" value="PHOSPHATIDYLGLYCEROL--PROLIPOPROTEIN DIACYLGLYCERYL TRANSFERASE"/>
    <property type="match status" value="1"/>
</dbReference>
<dbReference type="PANTHER" id="PTHR30589">
    <property type="entry name" value="PROLIPOPROTEIN DIACYLGLYCERYL TRANSFERASE"/>
    <property type="match status" value="1"/>
</dbReference>
<dbReference type="Pfam" id="PF01790">
    <property type="entry name" value="LGT"/>
    <property type="match status" value="1"/>
</dbReference>
<dbReference type="PROSITE" id="PS01311">
    <property type="entry name" value="LGT"/>
    <property type="match status" value="1"/>
</dbReference>
<protein>
    <recommendedName>
        <fullName evidence="1">Phosphatidylglycerol--prolipoprotein diacylglyceryl transferase</fullName>
        <ecNumber evidence="1">2.5.1.145</ecNumber>
    </recommendedName>
</protein>
<reference key="1">
    <citation type="journal article" date="2007" name="PLoS ONE">
        <title>Genome sequencing shows that European isolates of Francisella tularensis subspecies tularensis are almost identical to US laboratory strain Schu S4.</title>
        <authorList>
            <person name="Chaudhuri R.R."/>
            <person name="Ren C.-P."/>
            <person name="Desmond L."/>
            <person name="Vincent G.A."/>
            <person name="Silman N.J."/>
            <person name="Brehm J.K."/>
            <person name="Elmore M.J."/>
            <person name="Hudson M.J."/>
            <person name="Forsman M."/>
            <person name="Isherwood K.E."/>
            <person name="Gurycova D."/>
            <person name="Minton N.P."/>
            <person name="Titball R.W."/>
            <person name="Pallen M.J."/>
            <person name="Vipond R."/>
        </authorList>
    </citation>
    <scope>NUCLEOTIDE SEQUENCE [LARGE SCALE GENOMIC DNA]</scope>
    <source>
        <strain>FSC 198</strain>
    </source>
</reference>
<keyword id="KW-0997">Cell inner membrane</keyword>
<keyword id="KW-1003">Cell membrane</keyword>
<keyword id="KW-0472">Membrane</keyword>
<keyword id="KW-0808">Transferase</keyword>
<keyword id="KW-0812">Transmembrane</keyword>
<keyword id="KW-1133">Transmembrane helix</keyword>
<proteinExistence type="inferred from homology"/>
<feature type="chain" id="PRO_1000053431" description="Phosphatidylglycerol--prolipoprotein diacylglyceryl transferase">
    <location>
        <begin position="1"/>
        <end position="268"/>
    </location>
</feature>
<feature type="transmembrane region" description="Helical" evidence="1">
    <location>
        <begin position="14"/>
        <end position="34"/>
    </location>
</feature>
<feature type="transmembrane region" description="Helical" evidence="1">
    <location>
        <begin position="57"/>
        <end position="77"/>
    </location>
</feature>
<feature type="transmembrane region" description="Helical" evidence="1">
    <location>
        <begin position="90"/>
        <end position="110"/>
    </location>
</feature>
<feature type="transmembrane region" description="Helical" evidence="1">
    <location>
        <begin position="117"/>
        <end position="137"/>
    </location>
</feature>
<feature type="transmembrane region" description="Helical" evidence="1">
    <location>
        <begin position="174"/>
        <end position="194"/>
    </location>
</feature>
<feature type="transmembrane region" description="Helical" evidence="1">
    <location>
        <begin position="200"/>
        <end position="220"/>
    </location>
</feature>
<feature type="transmembrane region" description="Helical" evidence="1">
    <location>
        <begin position="240"/>
        <end position="260"/>
    </location>
</feature>
<feature type="binding site" evidence="1">
    <location>
        <position position="140"/>
    </location>
    <ligand>
        <name>a 1,2-diacyl-sn-glycero-3-phospho-(1'-sn-glycerol)</name>
        <dbReference type="ChEBI" id="CHEBI:64716"/>
    </ligand>
</feature>
<evidence type="ECO:0000255" key="1">
    <source>
        <dbReference type="HAMAP-Rule" id="MF_01147"/>
    </source>
</evidence>
<comment type="function">
    <text evidence="1">Catalyzes the transfer of the diacylglyceryl group from phosphatidylglycerol to the sulfhydryl group of the N-terminal cysteine of a prolipoprotein, the first step in the formation of mature lipoproteins.</text>
</comment>
<comment type="catalytic activity">
    <reaction evidence="1">
        <text>L-cysteinyl-[prolipoprotein] + a 1,2-diacyl-sn-glycero-3-phospho-(1'-sn-glycerol) = an S-1,2-diacyl-sn-glyceryl-L-cysteinyl-[prolipoprotein] + sn-glycerol 1-phosphate + H(+)</text>
        <dbReference type="Rhea" id="RHEA:56712"/>
        <dbReference type="Rhea" id="RHEA-COMP:14679"/>
        <dbReference type="Rhea" id="RHEA-COMP:14680"/>
        <dbReference type="ChEBI" id="CHEBI:15378"/>
        <dbReference type="ChEBI" id="CHEBI:29950"/>
        <dbReference type="ChEBI" id="CHEBI:57685"/>
        <dbReference type="ChEBI" id="CHEBI:64716"/>
        <dbReference type="ChEBI" id="CHEBI:140658"/>
        <dbReference type="EC" id="2.5.1.145"/>
    </reaction>
</comment>
<comment type="pathway">
    <text evidence="1">Protein modification; lipoprotein biosynthesis (diacylglyceryl transfer).</text>
</comment>
<comment type="subcellular location">
    <subcellularLocation>
        <location evidence="1">Cell inner membrane</location>
        <topology evidence="1">Multi-pass membrane protein</topology>
    </subcellularLocation>
</comment>
<comment type="similarity">
    <text evidence="1">Belongs to the Lgt family.</text>
</comment>